<proteinExistence type="inferred from homology"/>
<keyword id="KW-0342">GTP-binding</keyword>
<keyword id="KW-0547">Nucleotide-binding</keyword>
<keyword id="KW-1185">Reference proteome</keyword>
<keyword id="KW-0677">Repeat</keyword>
<keyword id="KW-0690">Ribosome biogenesis</keyword>
<comment type="function">
    <text evidence="1">GTPase that plays an essential role in the late steps of ribosome biogenesis.</text>
</comment>
<comment type="subunit">
    <text evidence="1">Associates with the 50S ribosomal subunit.</text>
</comment>
<comment type="similarity">
    <text evidence="1">Belongs to the TRAFAC class TrmE-Era-EngA-EngB-Septin-like GTPase superfamily. EngA (Der) GTPase family.</text>
</comment>
<organism>
    <name type="scientific">Helicobacter pylori (strain G27)</name>
    <dbReference type="NCBI Taxonomy" id="563041"/>
    <lineage>
        <taxon>Bacteria</taxon>
        <taxon>Pseudomonadati</taxon>
        <taxon>Campylobacterota</taxon>
        <taxon>Epsilonproteobacteria</taxon>
        <taxon>Campylobacterales</taxon>
        <taxon>Helicobacteraceae</taxon>
        <taxon>Helicobacter</taxon>
    </lineage>
</organism>
<name>DER_HELPG</name>
<gene>
    <name evidence="1" type="primary">der</name>
    <name type="synonym">engA</name>
    <name type="ordered locus">HPG27_793</name>
</gene>
<accession>B5Z7J9</accession>
<reference key="1">
    <citation type="journal article" date="2009" name="J. Bacteriol.">
        <title>The complete genome sequence of Helicobacter pylori strain G27.</title>
        <authorList>
            <person name="Baltrus D.A."/>
            <person name="Amieva M.R."/>
            <person name="Covacci A."/>
            <person name="Lowe T.M."/>
            <person name="Merrell D.S."/>
            <person name="Ottemann K.M."/>
            <person name="Stein M."/>
            <person name="Salama N.R."/>
            <person name="Guillemin K."/>
        </authorList>
    </citation>
    <scope>NUCLEOTIDE SEQUENCE [LARGE SCALE GENOMIC DNA]</scope>
    <source>
        <strain>G27</strain>
    </source>
</reference>
<evidence type="ECO:0000255" key="1">
    <source>
        <dbReference type="HAMAP-Rule" id="MF_00195"/>
    </source>
</evidence>
<dbReference type="EMBL" id="CP001173">
    <property type="protein sequence ID" value="ACI27548.1"/>
    <property type="molecule type" value="Genomic_DNA"/>
</dbReference>
<dbReference type="RefSeq" id="WP_001097791.1">
    <property type="nucleotide sequence ID" value="NC_011333.1"/>
</dbReference>
<dbReference type="SMR" id="B5Z7J9"/>
<dbReference type="KEGG" id="hpg:HPG27_793"/>
<dbReference type="HOGENOM" id="CLU_016077_6_2_7"/>
<dbReference type="Proteomes" id="UP000001735">
    <property type="component" value="Chromosome"/>
</dbReference>
<dbReference type="GO" id="GO:0005525">
    <property type="term" value="F:GTP binding"/>
    <property type="evidence" value="ECO:0007669"/>
    <property type="project" value="UniProtKB-UniRule"/>
</dbReference>
<dbReference type="GO" id="GO:0043022">
    <property type="term" value="F:ribosome binding"/>
    <property type="evidence" value="ECO:0007669"/>
    <property type="project" value="TreeGrafter"/>
</dbReference>
<dbReference type="GO" id="GO:0042254">
    <property type="term" value="P:ribosome biogenesis"/>
    <property type="evidence" value="ECO:0007669"/>
    <property type="project" value="UniProtKB-KW"/>
</dbReference>
<dbReference type="CDD" id="cd01894">
    <property type="entry name" value="EngA1"/>
    <property type="match status" value="1"/>
</dbReference>
<dbReference type="CDD" id="cd01895">
    <property type="entry name" value="EngA2"/>
    <property type="match status" value="1"/>
</dbReference>
<dbReference type="FunFam" id="3.30.300.20:FF:000004">
    <property type="entry name" value="GTPase Der"/>
    <property type="match status" value="1"/>
</dbReference>
<dbReference type="FunFam" id="3.40.50.300:FF:002598">
    <property type="entry name" value="GTPase Der"/>
    <property type="match status" value="1"/>
</dbReference>
<dbReference type="FunFam" id="3.40.50.300:FF:000494">
    <property type="entry name" value="tRNA modification GTPase MnmE"/>
    <property type="match status" value="1"/>
</dbReference>
<dbReference type="Gene3D" id="3.30.300.20">
    <property type="match status" value="1"/>
</dbReference>
<dbReference type="Gene3D" id="3.40.50.300">
    <property type="entry name" value="P-loop containing nucleotide triphosphate hydrolases"/>
    <property type="match status" value="2"/>
</dbReference>
<dbReference type="HAMAP" id="MF_00195">
    <property type="entry name" value="GTPase_Der"/>
    <property type="match status" value="1"/>
</dbReference>
<dbReference type="InterPro" id="IPR031166">
    <property type="entry name" value="G_ENGA"/>
</dbReference>
<dbReference type="InterPro" id="IPR006073">
    <property type="entry name" value="GTP-bd"/>
</dbReference>
<dbReference type="InterPro" id="IPR016484">
    <property type="entry name" value="GTPase_Der"/>
</dbReference>
<dbReference type="InterPro" id="IPR032859">
    <property type="entry name" value="KH_dom-like"/>
</dbReference>
<dbReference type="InterPro" id="IPR015946">
    <property type="entry name" value="KH_dom-like_a/b"/>
</dbReference>
<dbReference type="InterPro" id="IPR027417">
    <property type="entry name" value="P-loop_NTPase"/>
</dbReference>
<dbReference type="InterPro" id="IPR005225">
    <property type="entry name" value="Small_GTP-bd"/>
</dbReference>
<dbReference type="NCBIfam" id="TIGR03594">
    <property type="entry name" value="GTPase_EngA"/>
    <property type="match status" value="1"/>
</dbReference>
<dbReference type="NCBIfam" id="TIGR00231">
    <property type="entry name" value="small_GTP"/>
    <property type="match status" value="2"/>
</dbReference>
<dbReference type="PANTHER" id="PTHR43834">
    <property type="entry name" value="GTPASE DER"/>
    <property type="match status" value="1"/>
</dbReference>
<dbReference type="PANTHER" id="PTHR43834:SF6">
    <property type="entry name" value="GTPASE DER"/>
    <property type="match status" value="1"/>
</dbReference>
<dbReference type="Pfam" id="PF14714">
    <property type="entry name" value="KH_dom-like"/>
    <property type="match status" value="1"/>
</dbReference>
<dbReference type="Pfam" id="PF01926">
    <property type="entry name" value="MMR_HSR1"/>
    <property type="match status" value="2"/>
</dbReference>
<dbReference type="PIRSF" id="PIRSF006485">
    <property type="entry name" value="GTP-binding_EngA"/>
    <property type="match status" value="1"/>
</dbReference>
<dbReference type="PRINTS" id="PR00326">
    <property type="entry name" value="GTP1OBG"/>
</dbReference>
<dbReference type="SUPFAM" id="SSF52540">
    <property type="entry name" value="P-loop containing nucleoside triphosphate hydrolases"/>
    <property type="match status" value="2"/>
</dbReference>
<dbReference type="PROSITE" id="PS51712">
    <property type="entry name" value="G_ENGA"/>
    <property type="match status" value="2"/>
</dbReference>
<feature type="chain" id="PRO_1000099129" description="GTPase Der">
    <location>
        <begin position="1"/>
        <end position="460"/>
    </location>
</feature>
<feature type="domain" description="EngA-type G 1">
    <location>
        <begin position="9"/>
        <end position="171"/>
    </location>
</feature>
<feature type="domain" description="EngA-type G 2">
    <location>
        <begin position="199"/>
        <end position="370"/>
    </location>
</feature>
<feature type="domain" description="KH-like" evidence="1">
    <location>
        <begin position="371"/>
        <end position="455"/>
    </location>
</feature>
<feature type="binding site" evidence="1">
    <location>
        <begin position="15"/>
        <end position="22"/>
    </location>
    <ligand>
        <name>GTP</name>
        <dbReference type="ChEBI" id="CHEBI:37565"/>
        <label>1</label>
    </ligand>
</feature>
<feature type="binding site" evidence="1">
    <location>
        <begin position="62"/>
        <end position="66"/>
    </location>
    <ligand>
        <name>GTP</name>
        <dbReference type="ChEBI" id="CHEBI:37565"/>
        <label>1</label>
    </ligand>
</feature>
<feature type="binding site" evidence="1">
    <location>
        <begin position="123"/>
        <end position="126"/>
    </location>
    <ligand>
        <name>GTP</name>
        <dbReference type="ChEBI" id="CHEBI:37565"/>
        <label>1</label>
    </ligand>
</feature>
<feature type="binding site" evidence="1">
    <location>
        <begin position="205"/>
        <end position="212"/>
    </location>
    <ligand>
        <name>GTP</name>
        <dbReference type="ChEBI" id="CHEBI:37565"/>
        <label>2</label>
    </ligand>
</feature>
<feature type="binding site" evidence="1">
    <location>
        <begin position="252"/>
        <end position="256"/>
    </location>
    <ligand>
        <name>GTP</name>
        <dbReference type="ChEBI" id="CHEBI:37565"/>
        <label>2</label>
    </ligand>
</feature>
<feature type="binding site" evidence="1">
    <location>
        <begin position="316"/>
        <end position="319"/>
    </location>
    <ligand>
        <name>GTP</name>
        <dbReference type="ChEBI" id="CHEBI:37565"/>
        <label>2</label>
    </ligand>
</feature>
<sequence>MNTSHKTLKTIAILGQPNVGKSSLFNRLARERIAITSDFAGTTRDINKRKIALNGHEVELLDTGGMAKDALLSKEIKALNLKAAQMSDLILYVVDGKSIPSDEDIKLFREVFKTNPNCFLVINKIDNDKEKERAYAFSSFGMPKSFNISVSHNRGISALIDAVLNALSLNQIIEQDLDADILESLENNAPEEETKEEIIQVGIIGRVNVGKSSLLNALTKKERSLVSSVAGTTIDPIDETILIGDQKICFVDTAGIRHRGKILGIEKYALERTQKALEKSHIALLVLDVSAPFVELDEKISSLADKHSLGIILILNKWDIRYAPYEEIMATLKRKFRFLEYAPVITTSCLKARHIDEIKHKIIEVYECFSRRIPTSLLNSVITQATQKHPLPSDGGKLVKVYYATQFATKPPQISLIMNRPKALHFSYKRYLINTLRKEFNFLGTPLILNAKDKKSAQQN</sequence>
<protein>
    <recommendedName>
        <fullName evidence="1">GTPase Der</fullName>
    </recommendedName>
    <alternativeName>
        <fullName evidence="1">GTP-binding protein EngA</fullName>
    </alternativeName>
</protein>